<keyword id="KW-0488">Methylation</keyword>
<keyword id="KW-1185">Reference proteome</keyword>
<keyword id="KW-0687">Ribonucleoprotein</keyword>
<keyword id="KW-0689">Ribosomal protein</keyword>
<keyword id="KW-0694">RNA-binding</keyword>
<keyword id="KW-0699">rRNA-binding</keyword>
<evidence type="ECO:0000255" key="1">
    <source>
        <dbReference type="HAMAP-Rule" id="MF_00736"/>
    </source>
</evidence>
<evidence type="ECO:0000305" key="2"/>
<protein>
    <recommendedName>
        <fullName evidence="1">Large ribosomal subunit protein uL11</fullName>
    </recommendedName>
    <alternativeName>
        <fullName evidence="2">50S ribosomal protein L11</fullName>
    </alternativeName>
</protein>
<name>RL11_BRASO</name>
<dbReference type="EMBL" id="CU234118">
    <property type="protein sequence ID" value="CAL76851.1"/>
    <property type="molecule type" value="Genomic_DNA"/>
</dbReference>
<dbReference type="RefSeq" id="WP_006611824.1">
    <property type="nucleotide sequence ID" value="NC_009445.1"/>
</dbReference>
<dbReference type="SMR" id="A4YSH5"/>
<dbReference type="STRING" id="114615.BRADO3048"/>
<dbReference type="GeneID" id="92966334"/>
<dbReference type="KEGG" id="bra:BRADO3048"/>
<dbReference type="eggNOG" id="COG0080">
    <property type="taxonomic scope" value="Bacteria"/>
</dbReference>
<dbReference type="HOGENOM" id="CLU_074237_2_1_5"/>
<dbReference type="OrthoDB" id="9802408at2"/>
<dbReference type="Proteomes" id="UP000001994">
    <property type="component" value="Chromosome"/>
</dbReference>
<dbReference type="GO" id="GO:0022625">
    <property type="term" value="C:cytosolic large ribosomal subunit"/>
    <property type="evidence" value="ECO:0007669"/>
    <property type="project" value="TreeGrafter"/>
</dbReference>
<dbReference type="GO" id="GO:0070180">
    <property type="term" value="F:large ribosomal subunit rRNA binding"/>
    <property type="evidence" value="ECO:0007669"/>
    <property type="project" value="UniProtKB-UniRule"/>
</dbReference>
<dbReference type="GO" id="GO:0003735">
    <property type="term" value="F:structural constituent of ribosome"/>
    <property type="evidence" value="ECO:0007669"/>
    <property type="project" value="InterPro"/>
</dbReference>
<dbReference type="GO" id="GO:0006412">
    <property type="term" value="P:translation"/>
    <property type="evidence" value="ECO:0007669"/>
    <property type="project" value="UniProtKB-UniRule"/>
</dbReference>
<dbReference type="CDD" id="cd00349">
    <property type="entry name" value="Ribosomal_L11"/>
    <property type="match status" value="1"/>
</dbReference>
<dbReference type="FunFam" id="1.10.10.250:FF:000001">
    <property type="entry name" value="50S ribosomal protein L11"/>
    <property type="match status" value="1"/>
</dbReference>
<dbReference type="FunFam" id="3.30.1550.10:FF:000001">
    <property type="entry name" value="50S ribosomal protein L11"/>
    <property type="match status" value="1"/>
</dbReference>
<dbReference type="Gene3D" id="1.10.10.250">
    <property type="entry name" value="Ribosomal protein L11, C-terminal domain"/>
    <property type="match status" value="1"/>
</dbReference>
<dbReference type="Gene3D" id="3.30.1550.10">
    <property type="entry name" value="Ribosomal protein L11/L12, N-terminal domain"/>
    <property type="match status" value="1"/>
</dbReference>
<dbReference type="HAMAP" id="MF_00736">
    <property type="entry name" value="Ribosomal_uL11"/>
    <property type="match status" value="1"/>
</dbReference>
<dbReference type="InterPro" id="IPR000911">
    <property type="entry name" value="Ribosomal_uL11"/>
</dbReference>
<dbReference type="InterPro" id="IPR006519">
    <property type="entry name" value="Ribosomal_uL11_bac-typ"/>
</dbReference>
<dbReference type="InterPro" id="IPR020783">
    <property type="entry name" value="Ribosomal_uL11_C"/>
</dbReference>
<dbReference type="InterPro" id="IPR036769">
    <property type="entry name" value="Ribosomal_uL11_C_sf"/>
</dbReference>
<dbReference type="InterPro" id="IPR020785">
    <property type="entry name" value="Ribosomal_uL11_CS"/>
</dbReference>
<dbReference type="InterPro" id="IPR020784">
    <property type="entry name" value="Ribosomal_uL11_N"/>
</dbReference>
<dbReference type="InterPro" id="IPR036796">
    <property type="entry name" value="Ribosomal_uL11_N_sf"/>
</dbReference>
<dbReference type="NCBIfam" id="TIGR01632">
    <property type="entry name" value="L11_bact"/>
    <property type="match status" value="1"/>
</dbReference>
<dbReference type="PANTHER" id="PTHR11661">
    <property type="entry name" value="60S RIBOSOMAL PROTEIN L12"/>
    <property type="match status" value="1"/>
</dbReference>
<dbReference type="PANTHER" id="PTHR11661:SF1">
    <property type="entry name" value="LARGE RIBOSOMAL SUBUNIT PROTEIN UL11M"/>
    <property type="match status" value="1"/>
</dbReference>
<dbReference type="Pfam" id="PF00298">
    <property type="entry name" value="Ribosomal_L11"/>
    <property type="match status" value="1"/>
</dbReference>
<dbReference type="Pfam" id="PF03946">
    <property type="entry name" value="Ribosomal_L11_N"/>
    <property type="match status" value="1"/>
</dbReference>
<dbReference type="SMART" id="SM00649">
    <property type="entry name" value="RL11"/>
    <property type="match status" value="1"/>
</dbReference>
<dbReference type="SUPFAM" id="SSF54747">
    <property type="entry name" value="Ribosomal L11/L12e N-terminal domain"/>
    <property type="match status" value="1"/>
</dbReference>
<dbReference type="SUPFAM" id="SSF46906">
    <property type="entry name" value="Ribosomal protein L11, C-terminal domain"/>
    <property type="match status" value="1"/>
</dbReference>
<dbReference type="PROSITE" id="PS00359">
    <property type="entry name" value="RIBOSOMAL_L11"/>
    <property type="match status" value="1"/>
</dbReference>
<organism>
    <name type="scientific">Bradyrhizobium sp. (strain ORS 278)</name>
    <dbReference type="NCBI Taxonomy" id="114615"/>
    <lineage>
        <taxon>Bacteria</taxon>
        <taxon>Pseudomonadati</taxon>
        <taxon>Pseudomonadota</taxon>
        <taxon>Alphaproteobacteria</taxon>
        <taxon>Hyphomicrobiales</taxon>
        <taxon>Nitrobacteraceae</taxon>
        <taxon>Bradyrhizobium</taxon>
    </lineage>
</organism>
<comment type="function">
    <text evidence="1">Forms part of the ribosomal stalk which helps the ribosome interact with GTP-bound translation factors.</text>
</comment>
<comment type="subunit">
    <text evidence="1">Part of the ribosomal stalk of the 50S ribosomal subunit. Interacts with L10 and the large rRNA to form the base of the stalk. L10 forms an elongated spine to which L12 dimers bind in a sequential fashion forming a multimeric L10(L12)X complex.</text>
</comment>
<comment type="PTM">
    <text evidence="1">One or more lysine residues are methylated.</text>
</comment>
<comment type="similarity">
    <text evidence="1">Belongs to the universal ribosomal protein uL11 family.</text>
</comment>
<sequence>MAKKVTGYLKLQVPAGAANPSPPIGPALGQRGLNIMEFCKAFNAQTQKEEKNTPIPVVITIYADRSFTFEMKTPPMSFFLKQAAKIQSGSKAPGRDKAGKVTKAQVREIAEKKMKDLNCDSIESAMKMVEGSARSMGLEVAG</sequence>
<gene>
    <name evidence="1" type="primary">rplK</name>
    <name type="ordered locus">BRADO3048</name>
</gene>
<proteinExistence type="inferred from homology"/>
<accession>A4YSH5</accession>
<reference key="1">
    <citation type="journal article" date="2007" name="Science">
        <title>Legumes symbioses: absence of nod genes in photosynthetic bradyrhizobia.</title>
        <authorList>
            <person name="Giraud E."/>
            <person name="Moulin L."/>
            <person name="Vallenet D."/>
            <person name="Barbe V."/>
            <person name="Cytryn E."/>
            <person name="Avarre J.-C."/>
            <person name="Jaubert M."/>
            <person name="Simon D."/>
            <person name="Cartieaux F."/>
            <person name="Prin Y."/>
            <person name="Bena G."/>
            <person name="Hannibal L."/>
            <person name="Fardoux J."/>
            <person name="Kojadinovic M."/>
            <person name="Vuillet L."/>
            <person name="Lajus A."/>
            <person name="Cruveiller S."/>
            <person name="Rouy Z."/>
            <person name="Mangenot S."/>
            <person name="Segurens B."/>
            <person name="Dossat C."/>
            <person name="Franck W.L."/>
            <person name="Chang W.-S."/>
            <person name="Saunders E."/>
            <person name="Bruce D."/>
            <person name="Richardson P."/>
            <person name="Normand P."/>
            <person name="Dreyfus B."/>
            <person name="Pignol D."/>
            <person name="Stacey G."/>
            <person name="Emerich D."/>
            <person name="Vermeglio A."/>
            <person name="Medigue C."/>
            <person name="Sadowsky M."/>
        </authorList>
    </citation>
    <scope>NUCLEOTIDE SEQUENCE [LARGE SCALE GENOMIC DNA]</scope>
    <source>
        <strain>ORS 278</strain>
    </source>
</reference>
<feature type="chain" id="PRO_1000046147" description="Large ribosomal subunit protein uL11">
    <location>
        <begin position="1"/>
        <end position="142"/>
    </location>
</feature>